<evidence type="ECO:0000256" key="1">
    <source>
        <dbReference type="SAM" id="MobiDB-lite"/>
    </source>
</evidence>
<evidence type="ECO:0000269" key="2">
    <source>
    </source>
</evidence>
<evidence type="ECO:0000305" key="3"/>
<evidence type="ECO:0000305" key="4">
    <source>
    </source>
</evidence>
<accession>P16761</accession>
<accession>Q7M6Q8</accession>
<dbReference type="EMBL" id="X17403">
    <property type="protein sequence ID" value="CAA35424.1"/>
    <property type="molecule type" value="Genomic_DNA"/>
</dbReference>
<dbReference type="EMBL" id="BK000394">
    <property type="protein sequence ID" value="DAA00129.1"/>
    <property type="molecule type" value="Genomic_DNA"/>
</dbReference>
<dbReference type="PIR" id="S09788">
    <property type="entry name" value="QQBET2"/>
</dbReference>
<dbReference type="RefSeq" id="YP_081484.1">
    <property type="nucleotide sequence ID" value="NC_006273.2"/>
</dbReference>
<dbReference type="SMR" id="P16761"/>
<dbReference type="DNASU" id="3077473"/>
<dbReference type="GeneID" id="3077473"/>
<dbReference type="KEGG" id="vg:3077473"/>
<dbReference type="Proteomes" id="UP000008991">
    <property type="component" value="Segment"/>
</dbReference>
<dbReference type="Proteomes" id="UP000008992">
    <property type="component" value="Segment"/>
</dbReference>
<dbReference type="GO" id="GO:0030430">
    <property type="term" value="C:host cell cytoplasm"/>
    <property type="evidence" value="ECO:0007669"/>
    <property type="project" value="UniProtKB-SubCell"/>
</dbReference>
<dbReference type="GO" id="GO:0019033">
    <property type="term" value="C:viral tegument"/>
    <property type="evidence" value="ECO:0007669"/>
    <property type="project" value="UniProtKB-SubCell"/>
</dbReference>
<dbReference type="InterPro" id="IPR011992">
    <property type="entry name" value="EF-hand-dom_pair"/>
</dbReference>
<dbReference type="InterPro" id="IPR006731">
    <property type="entry name" value="Herpes_pp85"/>
</dbReference>
<dbReference type="Pfam" id="PF04637">
    <property type="entry name" value="Herpes_pp85"/>
    <property type="match status" value="1"/>
</dbReference>
<dbReference type="SUPFAM" id="SSF47473">
    <property type="entry name" value="EF-hand"/>
    <property type="match status" value="1"/>
</dbReference>
<name>PP85_HCMVA</name>
<gene>
    <name type="primary">UL25</name>
</gene>
<sequence>MSSRRRSSSRRSGEPSTVIYIPSSNEDTPADEEAEDSVFTSTRARSATEDLDRMEAGLSPYSVSSDAPSSFELVRETGGTGAAKKPSEKKRSSSRRQPQIAAGAPRGSPATPKAGKSPKVSRPPSVPSLPENGAGGGGDDNSSSGGSSSRTTSNSSRSTSPVAPGEPSAAEGDEFSFCDSDIEDFERECYRVSVADNLGFEPSVVAPQHVEYLKFVLQDFDVQHLRRLNECIPMPAFALTSLVDPVLNNVAPGERDLTRRIITHAVIINYYYVAQKKARHMVEAIRTTVRGDTVRRVAAQVNNQSRSGRAAALALHFLTSRKGVTDGQYATSLRRLDEELRHRGTPESPRLTEVYQTLRDYNVLFYTAHYTSRGALYLYRQNLQRLNENHRGMLRLLSVEEICEEHTLNDLAFLVGVELMITHFQRTIRVLRCYLQHQLQSISELCYLIYVQLPSLREDYAQLSDVIYWAVSQNYDYALYASTPALFDFLRVVRQQDAFICTDYVYCALRLLACPDRPIIGDTGGSSSSQRLVGEFMVRDPLLRDPRATHLRQKLITRDICVARLQAQPSSRHIPVEHTGVSSVTLLKIFSQVPPDEREEDTLREMALKAFMEANGNHPEQICRSPPPPLPPRDYPQRDERDRHRRDRRDSGEYCC</sequence>
<proteinExistence type="inferred from homology"/>
<keyword id="KW-1035">Host cytoplasm</keyword>
<keyword id="KW-0597">Phosphoprotein</keyword>
<keyword id="KW-1185">Reference proteome</keyword>
<keyword id="KW-0946">Virion</keyword>
<keyword id="KW-0920">Virion tegument</keyword>
<protein>
    <recommendedName>
        <fullName>Phosphoprotein 85</fullName>
        <shortName>pp85</shortName>
    </recommendedName>
    <alternativeName>
        <fullName>Phosphoprotein UL25</fullName>
    </alternativeName>
</protein>
<organismHost>
    <name type="scientific">Homo sapiens</name>
    <name type="common">Human</name>
    <dbReference type="NCBI Taxonomy" id="9606"/>
</organismHost>
<feature type="chain" id="PRO_0000115314" description="Phosphoprotein 85">
    <location>
        <begin position="1"/>
        <end position="656"/>
    </location>
</feature>
<feature type="region of interest" description="Disordered" evidence="1">
    <location>
        <begin position="1"/>
        <end position="174"/>
    </location>
</feature>
<feature type="region of interest" description="Disordered" evidence="1">
    <location>
        <begin position="615"/>
        <end position="656"/>
    </location>
</feature>
<feature type="compositionally biased region" description="Basic and acidic residues" evidence="1">
    <location>
        <begin position="46"/>
        <end position="55"/>
    </location>
</feature>
<feature type="compositionally biased region" description="Low complexity" evidence="1">
    <location>
        <begin position="59"/>
        <end position="70"/>
    </location>
</feature>
<feature type="compositionally biased region" description="Low complexity" evidence="1">
    <location>
        <begin position="140"/>
        <end position="160"/>
    </location>
</feature>
<feature type="compositionally biased region" description="Pro residues" evidence="1">
    <location>
        <begin position="625"/>
        <end position="634"/>
    </location>
</feature>
<feature type="compositionally biased region" description="Basic and acidic residues" evidence="1">
    <location>
        <begin position="635"/>
        <end position="656"/>
    </location>
</feature>
<reference key="1">
    <citation type="journal article" date="1990" name="Curr. Top. Microbiol. Immunol.">
        <title>Analysis of the protein-coding content of the sequence of human cytomegalovirus strain AD169.</title>
        <authorList>
            <person name="Chee M.S."/>
            <person name="Bankier A.T."/>
            <person name="Beck S."/>
            <person name="Bohni R."/>
            <person name="Brown C.M."/>
            <person name="Cerny R."/>
            <person name="Horsnell T."/>
            <person name="Hutchison C.A. III"/>
            <person name="Kouzarides T."/>
            <person name="Martignetti J.A."/>
            <person name="Preddie E."/>
            <person name="Satchwell S.C."/>
            <person name="Tomlinson P."/>
            <person name="Weston K.M."/>
            <person name="Barrell B.G."/>
        </authorList>
    </citation>
    <scope>NUCLEOTIDE SEQUENCE [LARGE SCALE GENOMIC DNA]</scope>
</reference>
<reference key="2">
    <citation type="journal article" date="2003" name="J. Gen. Virol.">
        <title>The human cytomegalovirus genome revisited: comparison with the chimpanzee cytomegalovirus genome.</title>
        <authorList>
            <person name="Davison A.J."/>
            <person name="Dolan A."/>
            <person name="Akter P."/>
            <person name="Addison C."/>
            <person name="Dargan D.J."/>
            <person name="Alcendor D.J."/>
            <person name="McGeoch D.J."/>
            <person name="Hayward G.S."/>
        </authorList>
    </citation>
    <scope>GENOME REANNOTATION</scope>
</reference>
<reference key="3">
    <citation type="journal article" date="2003" name="J. Gen. Virol.">
        <authorList>
            <person name="Davison A.J."/>
            <person name="Dolan A."/>
            <person name="Akter P."/>
            <person name="Addison C."/>
            <person name="Dargan D.J."/>
            <person name="Alcendor D.J."/>
            <person name="McGeoch D.J."/>
            <person name="Hayward G.S."/>
        </authorList>
    </citation>
    <scope>ERRATUM OF PUBMED:12533697</scope>
</reference>
<reference key="4">
    <citation type="journal article" date="1999" name="J. Virol.">
        <title>The novel structural protein of human cytomegalovirus, pUL25, is localized in the viral tegument.</title>
        <authorList>
            <person name="Zini N."/>
            <person name="Battista M.C."/>
            <person name="Santi S."/>
            <person name="Riccio M."/>
            <person name="Bergamini G."/>
            <person name="Landini M.P."/>
            <person name="Maraldi N.M."/>
        </authorList>
    </citation>
    <scope>SUBCELLULAR LOCATION</scope>
</reference>
<reference key="5">
    <citation type="journal article" date="2004" name="J. Virol.">
        <title>Identification of proteins in human cytomegalovirus (HCMV) particles: the HCMV proteome.</title>
        <authorList>
            <person name="Varnum S.M."/>
            <person name="Streblow D.N."/>
            <person name="Monroe M.E."/>
            <person name="Smith P."/>
            <person name="Auberry K.J."/>
            <person name="Pasa-Tolic L."/>
            <person name="Wang D."/>
            <person name="Camp D.G. II"/>
            <person name="Rodland K."/>
            <person name="Wiley S."/>
            <person name="Britt W."/>
            <person name="Shenk T."/>
            <person name="Smith R.D."/>
            <person name="Nelson J.A."/>
        </authorList>
    </citation>
    <scope>IDENTIFICATION</scope>
</reference>
<reference key="6">
    <citation type="journal article" date="2004" name="J. Virol.">
        <authorList>
            <person name="Varnum S.M."/>
            <person name="Streblow D.N."/>
            <person name="Monroe M.E."/>
            <person name="Smith P."/>
            <person name="Auberry K.J."/>
            <person name="Pasa-Tolic L."/>
            <person name="Wang D."/>
            <person name="Camp D.G. II"/>
            <person name="Rodland K."/>
            <person name="Wiley S."/>
            <person name="Britt W."/>
            <person name="Shenk T."/>
            <person name="Smith R.D."/>
            <person name="Nelson J.A."/>
        </authorList>
    </citation>
    <scope>ERRATUM OF PUBMED:15452216</scope>
</reference>
<comment type="subcellular location">
    <subcellularLocation>
        <location evidence="4">Virion tegument</location>
    </subcellularLocation>
    <subcellularLocation>
        <location evidence="2">Host cytoplasm</location>
    </subcellularLocation>
    <text>Expressed exclusively at the cytoplasmic level during the late phase of the virus replication cycle. Also found in dense bodies.</text>
</comment>
<comment type="PTM">
    <text evidence="3">Phosphorylated.</text>
</comment>
<comment type="miscellaneous">
    <text>Major target antigen for the anti-CMV antibody response.</text>
</comment>
<comment type="similarity">
    <text evidence="3">Belongs to the herpesviridae pp85 family.</text>
</comment>
<organism>
    <name type="scientific">Human cytomegalovirus (strain AD169)</name>
    <name type="common">HHV-5</name>
    <name type="synonym">Human herpesvirus 5</name>
    <dbReference type="NCBI Taxonomy" id="10360"/>
    <lineage>
        <taxon>Viruses</taxon>
        <taxon>Duplodnaviria</taxon>
        <taxon>Heunggongvirae</taxon>
        <taxon>Peploviricota</taxon>
        <taxon>Herviviricetes</taxon>
        <taxon>Herpesvirales</taxon>
        <taxon>Orthoherpesviridae</taxon>
        <taxon>Betaherpesvirinae</taxon>
        <taxon>Cytomegalovirus</taxon>
        <taxon>Cytomegalovirus humanbeta5</taxon>
        <taxon>Human cytomegalovirus</taxon>
    </lineage>
</organism>